<proteinExistence type="inferred from homology"/>
<organism>
    <name type="scientific">Shewanella baltica (strain OS195)</name>
    <dbReference type="NCBI Taxonomy" id="399599"/>
    <lineage>
        <taxon>Bacteria</taxon>
        <taxon>Pseudomonadati</taxon>
        <taxon>Pseudomonadota</taxon>
        <taxon>Gammaproteobacteria</taxon>
        <taxon>Alteromonadales</taxon>
        <taxon>Shewanellaceae</taxon>
        <taxon>Shewanella</taxon>
    </lineage>
</organism>
<protein>
    <recommendedName>
        <fullName evidence="1">3-dehydroquinate dehydratase</fullName>
        <shortName evidence="1">3-dehydroquinase</shortName>
        <ecNumber evidence="1">4.2.1.10</ecNumber>
    </recommendedName>
    <alternativeName>
        <fullName evidence="1">Type II DHQase</fullName>
    </alternativeName>
</protein>
<comment type="function">
    <text evidence="1">Catalyzes a trans-dehydration via an enolate intermediate.</text>
</comment>
<comment type="catalytic activity">
    <reaction evidence="1">
        <text>3-dehydroquinate = 3-dehydroshikimate + H2O</text>
        <dbReference type="Rhea" id="RHEA:21096"/>
        <dbReference type="ChEBI" id="CHEBI:15377"/>
        <dbReference type="ChEBI" id="CHEBI:16630"/>
        <dbReference type="ChEBI" id="CHEBI:32364"/>
        <dbReference type="EC" id="4.2.1.10"/>
    </reaction>
</comment>
<comment type="pathway">
    <text evidence="1">Metabolic intermediate biosynthesis; chorismate biosynthesis; chorismate from D-erythrose 4-phosphate and phosphoenolpyruvate: step 3/7.</text>
</comment>
<comment type="subunit">
    <text evidence="1">Homododecamer.</text>
</comment>
<comment type="similarity">
    <text evidence="1">Belongs to the type-II 3-dehydroquinase family.</text>
</comment>
<feature type="chain" id="PRO_1000077059" description="3-dehydroquinate dehydratase">
    <location>
        <begin position="1"/>
        <end position="146"/>
    </location>
</feature>
<feature type="active site" description="Proton acceptor" evidence="1">
    <location>
        <position position="24"/>
    </location>
</feature>
<feature type="active site" description="Proton donor" evidence="1">
    <location>
        <position position="99"/>
    </location>
</feature>
<feature type="binding site" evidence="1">
    <location>
        <position position="73"/>
    </location>
    <ligand>
        <name>substrate</name>
    </ligand>
</feature>
<feature type="binding site" evidence="1">
    <location>
        <position position="79"/>
    </location>
    <ligand>
        <name>substrate</name>
    </ligand>
</feature>
<feature type="binding site" evidence="1">
    <location>
        <position position="86"/>
    </location>
    <ligand>
        <name>substrate</name>
    </ligand>
</feature>
<feature type="binding site" evidence="1">
    <location>
        <begin position="100"/>
        <end position="101"/>
    </location>
    <ligand>
        <name>substrate</name>
    </ligand>
</feature>
<feature type="binding site" evidence="1">
    <location>
        <position position="110"/>
    </location>
    <ligand>
        <name>substrate</name>
    </ligand>
</feature>
<feature type="site" description="Transition state stabilizer" evidence="1">
    <location>
        <position position="19"/>
    </location>
</feature>
<reference key="1">
    <citation type="submission" date="2007-11" db="EMBL/GenBank/DDBJ databases">
        <title>Complete sequence of chromosome of Shewanella baltica OS195.</title>
        <authorList>
            <consortium name="US DOE Joint Genome Institute"/>
            <person name="Copeland A."/>
            <person name="Lucas S."/>
            <person name="Lapidus A."/>
            <person name="Barry K."/>
            <person name="Glavina del Rio T."/>
            <person name="Dalin E."/>
            <person name="Tice H."/>
            <person name="Pitluck S."/>
            <person name="Chain P."/>
            <person name="Malfatti S."/>
            <person name="Shin M."/>
            <person name="Vergez L."/>
            <person name="Schmutz J."/>
            <person name="Larimer F."/>
            <person name="Land M."/>
            <person name="Hauser L."/>
            <person name="Kyrpides N."/>
            <person name="Kim E."/>
            <person name="Brettar I."/>
            <person name="Rodrigues J."/>
            <person name="Konstantinidis K."/>
            <person name="Klappenbach J."/>
            <person name="Hofle M."/>
            <person name="Tiedje J."/>
            <person name="Richardson P."/>
        </authorList>
    </citation>
    <scope>NUCLEOTIDE SEQUENCE [LARGE SCALE GENOMIC DNA]</scope>
    <source>
        <strain>OS195</strain>
    </source>
</reference>
<gene>
    <name evidence="1" type="primary">aroQ</name>
    <name type="ordered locus">Sbal195_3980</name>
</gene>
<sequence length="146" mass="16048">MSHKILLVNGPNLNLLGRREPSVYGHQTLADIVAELNQQAKLAEVELEHIQSNAEFELINAIHATDAQMIIINPAAFTHTSVALRDALLGVAIPFFEVHLSNVHAREAFRHHSYFSDKAIGVICGFGSQGYEFALAAAIKRLNQPL</sequence>
<dbReference type="EC" id="4.2.1.10" evidence="1"/>
<dbReference type="EMBL" id="CP000891">
    <property type="protein sequence ID" value="ABX51140.1"/>
    <property type="molecule type" value="Genomic_DNA"/>
</dbReference>
<dbReference type="RefSeq" id="WP_012197679.1">
    <property type="nucleotide sequence ID" value="NC_009997.1"/>
</dbReference>
<dbReference type="SMR" id="A9L4M4"/>
<dbReference type="GeneID" id="11773980"/>
<dbReference type="KEGG" id="sbn:Sbal195_3980"/>
<dbReference type="HOGENOM" id="CLU_090968_1_0_6"/>
<dbReference type="UniPathway" id="UPA00053">
    <property type="reaction ID" value="UER00086"/>
</dbReference>
<dbReference type="Proteomes" id="UP000000770">
    <property type="component" value="Chromosome"/>
</dbReference>
<dbReference type="GO" id="GO:0003855">
    <property type="term" value="F:3-dehydroquinate dehydratase activity"/>
    <property type="evidence" value="ECO:0007669"/>
    <property type="project" value="UniProtKB-UniRule"/>
</dbReference>
<dbReference type="GO" id="GO:0008652">
    <property type="term" value="P:amino acid biosynthetic process"/>
    <property type="evidence" value="ECO:0007669"/>
    <property type="project" value="UniProtKB-KW"/>
</dbReference>
<dbReference type="GO" id="GO:0009073">
    <property type="term" value="P:aromatic amino acid family biosynthetic process"/>
    <property type="evidence" value="ECO:0007669"/>
    <property type="project" value="UniProtKB-KW"/>
</dbReference>
<dbReference type="GO" id="GO:0009423">
    <property type="term" value="P:chorismate biosynthetic process"/>
    <property type="evidence" value="ECO:0007669"/>
    <property type="project" value="UniProtKB-UniRule"/>
</dbReference>
<dbReference type="GO" id="GO:0019631">
    <property type="term" value="P:quinate catabolic process"/>
    <property type="evidence" value="ECO:0007669"/>
    <property type="project" value="TreeGrafter"/>
</dbReference>
<dbReference type="CDD" id="cd00466">
    <property type="entry name" value="DHQase_II"/>
    <property type="match status" value="1"/>
</dbReference>
<dbReference type="Gene3D" id="3.40.50.9100">
    <property type="entry name" value="Dehydroquinase, class II"/>
    <property type="match status" value="1"/>
</dbReference>
<dbReference type="HAMAP" id="MF_00169">
    <property type="entry name" value="AroQ"/>
    <property type="match status" value="1"/>
</dbReference>
<dbReference type="InterPro" id="IPR001874">
    <property type="entry name" value="DHquinase_II"/>
</dbReference>
<dbReference type="InterPro" id="IPR018509">
    <property type="entry name" value="DHquinase_II_CS"/>
</dbReference>
<dbReference type="InterPro" id="IPR036441">
    <property type="entry name" value="DHquinase_II_sf"/>
</dbReference>
<dbReference type="NCBIfam" id="TIGR01088">
    <property type="entry name" value="aroQ"/>
    <property type="match status" value="1"/>
</dbReference>
<dbReference type="NCBIfam" id="NF003804">
    <property type="entry name" value="PRK05395.1-1"/>
    <property type="match status" value="1"/>
</dbReference>
<dbReference type="NCBIfam" id="NF003805">
    <property type="entry name" value="PRK05395.1-2"/>
    <property type="match status" value="1"/>
</dbReference>
<dbReference type="NCBIfam" id="NF003806">
    <property type="entry name" value="PRK05395.1-3"/>
    <property type="match status" value="1"/>
</dbReference>
<dbReference type="NCBIfam" id="NF003807">
    <property type="entry name" value="PRK05395.1-4"/>
    <property type="match status" value="1"/>
</dbReference>
<dbReference type="PANTHER" id="PTHR21272">
    <property type="entry name" value="CATABOLIC 3-DEHYDROQUINASE"/>
    <property type="match status" value="1"/>
</dbReference>
<dbReference type="PANTHER" id="PTHR21272:SF3">
    <property type="entry name" value="CATABOLIC 3-DEHYDROQUINASE"/>
    <property type="match status" value="1"/>
</dbReference>
<dbReference type="Pfam" id="PF01220">
    <property type="entry name" value="DHquinase_II"/>
    <property type="match status" value="1"/>
</dbReference>
<dbReference type="PIRSF" id="PIRSF001399">
    <property type="entry name" value="DHquinase_II"/>
    <property type="match status" value="1"/>
</dbReference>
<dbReference type="SUPFAM" id="SSF52304">
    <property type="entry name" value="Type II 3-dehydroquinate dehydratase"/>
    <property type="match status" value="1"/>
</dbReference>
<dbReference type="PROSITE" id="PS01029">
    <property type="entry name" value="DEHYDROQUINASE_II"/>
    <property type="match status" value="1"/>
</dbReference>
<evidence type="ECO:0000255" key="1">
    <source>
        <dbReference type="HAMAP-Rule" id="MF_00169"/>
    </source>
</evidence>
<keyword id="KW-0028">Amino-acid biosynthesis</keyword>
<keyword id="KW-0057">Aromatic amino acid biosynthesis</keyword>
<keyword id="KW-0456">Lyase</keyword>
<accession>A9L4M4</accession>
<name>AROQ_SHEB9</name>